<organism>
    <name type="scientific">Methanocaldococcus jannaschii (strain ATCC 43067 / DSM 2661 / JAL-1 / JCM 10045 / NBRC 100440)</name>
    <name type="common">Methanococcus jannaschii</name>
    <dbReference type="NCBI Taxonomy" id="243232"/>
    <lineage>
        <taxon>Archaea</taxon>
        <taxon>Methanobacteriati</taxon>
        <taxon>Methanobacteriota</taxon>
        <taxon>Methanomada group</taxon>
        <taxon>Methanococci</taxon>
        <taxon>Methanococcales</taxon>
        <taxon>Methanocaldococcaceae</taxon>
        <taxon>Methanocaldococcus</taxon>
    </lineage>
</organism>
<gene>
    <name type="ordered locus">MJ0928</name>
</gene>
<dbReference type="EC" id="2.1.1.-" evidence="2"/>
<dbReference type="EMBL" id="L77117">
    <property type="protein sequence ID" value="AAB98930.1"/>
    <property type="molecule type" value="Genomic_DNA"/>
</dbReference>
<dbReference type="PIR" id="H64415">
    <property type="entry name" value="H64415"/>
</dbReference>
<dbReference type="RefSeq" id="WP_010870442.1">
    <property type="nucleotide sequence ID" value="NC_000909.1"/>
</dbReference>
<dbReference type="SMR" id="Q58338"/>
<dbReference type="FunCoup" id="Q58338">
    <property type="interactions" value="69"/>
</dbReference>
<dbReference type="STRING" id="243232.MJ_0928"/>
<dbReference type="PaxDb" id="243232-MJ_0928"/>
<dbReference type="EnsemblBacteria" id="AAB98930">
    <property type="protein sequence ID" value="AAB98930"/>
    <property type="gene ID" value="MJ_0928"/>
</dbReference>
<dbReference type="GeneID" id="1451817"/>
<dbReference type="KEGG" id="mja:MJ_0928"/>
<dbReference type="eggNOG" id="arCOG00109">
    <property type="taxonomic scope" value="Archaea"/>
</dbReference>
<dbReference type="HOGENOM" id="CLU_018398_6_2_2"/>
<dbReference type="InParanoid" id="Q58338"/>
<dbReference type="OrthoDB" id="27149at2157"/>
<dbReference type="PhylomeDB" id="Q58338"/>
<dbReference type="Proteomes" id="UP000000805">
    <property type="component" value="Chromosome"/>
</dbReference>
<dbReference type="GO" id="GO:0035657">
    <property type="term" value="C:eRF1 methyltransferase complex"/>
    <property type="evidence" value="ECO:0000318"/>
    <property type="project" value="GO_Central"/>
</dbReference>
<dbReference type="GO" id="GO:0003676">
    <property type="term" value="F:nucleic acid binding"/>
    <property type="evidence" value="ECO:0007669"/>
    <property type="project" value="InterPro"/>
</dbReference>
<dbReference type="GO" id="GO:0008276">
    <property type="term" value="F:protein methyltransferase activity"/>
    <property type="evidence" value="ECO:0000318"/>
    <property type="project" value="GO_Central"/>
</dbReference>
<dbReference type="GO" id="GO:0008757">
    <property type="term" value="F:S-adenosylmethionine-dependent methyltransferase activity"/>
    <property type="evidence" value="ECO:0000318"/>
    <property type="project" value="GO_Central"/>
</dbReference>
<dbReference type="GO" id="GO:0032259">
    <property type="term" value="P:methylation"/>
    <property type="evidence" value="ECO:0007669"/>
    <property type="project" value="UniProtKB-KW"/>
</dbReference>
<dbReference type="CDD" id="cd02440">
    <property type="entry name" value="AdoMet_MTases"/>
    <property type="match status" value="1"/>
</dbReference>
<dbReference type="FunFam" id="3.40.50.150:FF:000673">
    <property type="entry name" value="N5-glutamine methyltransferase, HemK family"/>
    <property type="match status" value="1"/>
</dbReference>
<dbReference type="Gene3D" id="3.40.50.150">
    <property type="entry name" value="Vaccinia Virus protein VP39"/>
    <property type="match status" value="1"/>
</dbReference>
<dbReference type="InterPro" id="IPR002052">
    <property type="entry name" value="DNA_methylase_N6_adenine_CS"/>
</dbReference>
<dbReference type="InterPro" id="IPR052190">
    <property type="entry name" value="Euk-Arch_PrmC-MTase"/>
</dbReference>
<dbReference type="InterPro" id="IPR004557">
    <property type="entry name" value="PrmC-related"/>
</dbReference>
<dbReference type="InterPro" id="IPR029063">
    <property type="entry name" value="SAM-dependent_MTases_sf"/>
</dbReference>
<dbReference type="InterPro" id="IPR007848">
    <property type="entry name" value="Small_mtfrase_dom"/>
</dbReference>
<dbReference type="NCBIfam" id="TIGR00537">
    <property type="entry name" value="hemK_rel_arch"/>
    <property type="match status" value="1"/>
</dbReference>
<dbReference type="NCBIfam" id="NF011529">
    <property type="entry name" value="PRK14968.1-3"/>
    <property type="match status" value="1"/>
</dbReference>
<dbReference type="PANTHER" id="PTHR45875">
    <property type="entry name" value="METHYLTRANSFERASE N6AMT1"/>
    <property type="match status" value="1"/>
</dbReference>
<dbReference type="PANTHER" id="PTHR45875:SF1">
    <property type="entry name" value="METHYLTRANSFERASE N6AMT1"/>
    <property type="match status" value="1"/>
</dbReference>
<dbReference type="Pfam" id="PF05175">
    <property type="entry name" value="MTS"/>
    <property type="match status" value="1"/>
</dbReference>
<dbReference type="SUPFAM" id="SSF53335">
    <property type="entry name" value="S-adenosyl-L-methionine-dependent methyltransferases"/>
    <property type="match status" value="1"/>
</dbReference>
<dbReference type="PROSITE" id="PS00092">
    <property type="entry name" value="N6_MTASE"/>
    <property type="match status" value="1"/>
</dbReference>
<keyword id="KW-0489">Methyltransferase</keyword>
<keyword id="KW-1185">Reference proteome</keyword>
<keyword id="KW-0949">S-adenosyl-L-methionine</keyword>
<keyword id="KW-0808">Transferase</keyword>
<feature type="chain" id="PRO_0000157177" description="Putative protein N5-glutamine methyltransferase MJ0928">
    <location>
        <begin position="1"/>
        <end position="197"/>
    </location>
</feature>
<feature type="binding site" evidence="1">
    <location>
        <begin position="42"/>
        <end position="46"/>
    </location>
    <ligand>
        <name>S-adenosyl-L-methionine</name>
        <dbReference type="ChEBI" id="CHEBI:59789"/>
    </ligand>
</feature>
<feature type="binding site" evidence="1">
    <location>
        <position position="64"/>
    </location>
    <ligand>
        <name>S-adenosyl-L-methionine</name>
        <dbReference type="ChEBI" id="CHEBI:59789"/>
    </ligand>
</feature>
<feature type="binding site" evidence="1">
    <location>
        <begin position="105"/>
        <end position="108"/>
    </location>
    <ligand>
        <name>substrate</name>
    </ligand>
</feature>
<feature type="binding site" evidence="1">
    <location>
        <position position="105"/>
    </location>
    <ligand>
        <name>S-adenosyl-L-methionine</name>
        <dbReference type="ChEBI" id="CHEBI:59789"/>
    </ligand>
</feature>
<sequence length="197" mass="22057">MIIEIEGIKLKLHPEVYEPAEDSILLLKNLVDVKNKDVLEIGVGTGLISIACAKKGAKKIVGVDINPYAVKLAKENAKLNNVNISFFESDLFENVTGKFDVILFNPPYLPTSEDEKIDSYLNFAFDGGKDGREILDRFIYELPNYLKKGGVVQILQSSLTGEKETINKLKPLGFKVEISARLKVPFEELMVINAWRL</sequence>
<protein>
    <recommendedName>
        <fullName evidence="2">Putative protein N5-glutamine methyltransferase MJ0928</fullName>
        <ecNumber evidence="2">2.1.1.-</ecNumber>
    </recommendedName>
    <alternativeName>
        <fullName>M.MjaHemkP</fullName>
    </alternativeName>
</protein>
<proteinExistence type="inferred from homology"/>
<evidence type="ECO:0000250" key="1"/>
<evidence type="ECO:0000305" key="2"/>
<accession>Q58338</accession>
<name>Y928_METJA</name>
<comment type="function">
    <text evidence="1">Putative protein methyltransferase using S-adenosyl-L-methionine as the methyl donor. May methylate a Gln residue in target proteins (By similarity).</text>
</comment>
<comment type="catalytic activity">
    <reaction evidence="2">
        <text>L-glutaminyl-[protein] + S-adenosyl-L-methionine = N(5)-methyl-L-glutaminyl-[protein] + S-adenosyl-L-homocysteine + H(+)</text>
        <dbReference type="Rhea" id="RHEA:57452"/>
        <dbReference type="Rhea" id="RHEA-COMP:10207"/>
        <dbReference type="Rhea" id="RHEA-COMP:14895"/>
        <dbReference type="ChEBI" id="CHEBI:15378"/>
        <dbReference type="ChEBI" id="CHEBI:30011"/>
        <dbReference type="ChEBI" id="CHEBI:57856"/>
        <dbReference type="ChEBI" id="CHEBI:59789"/>
        <dbReference type="ChEBI" id="CHEBI:61891"/>
    </reaction>
</comment>
<comment type="similarity">
    <text evidence="2">Belongs to the eukaryotic/archaeal PrmC-related family.</text>
</comment>
<reference key="1">
    <citation type="journal article" date="1996" name="Science">
        <title>Complete genome sequence of the methanogenic archaeon, Methanococcus jannaschii.</title>
        <authorList>
            <person name="Bult C.J."/>
            <person name="White O."/>
            <person name="Olsen G.J."/>
            <person name="Zhou L."/>
            <person name="Fleischmann R.D."/>
            <person name="Sutton G.G."/>
            <person name="Blake J.A."/>
            <person name="FitzGerald L.M."/>
            <person name="Clayton R.A."/>
            <person name="Gocayne J.D."/>
            <person name="Kerlavage A.R."/>
            <person name="Dougherty B.A."/>
            <person name="Tomb J.-F."/>
            <person name="Adams M.D."/>
            <person name="Reich C.I."/>
            <person name="Overbeek R."/>
            <person name="Kirkness E.F."/>
            <person name="Weinstock K.G."/>
            <person name="Merrick J.M."/>
            <person name="Glodek A."/>
            <person name="Scott J.L."/>
            <person name="Geoghagen N.S.M."/>
            <person name="Weidman J.F."/>
            <person name="Fuhrmann J.L."/>
            <person name="Nguyen D."/>
            <person name="Utterback T.R."/>
            <person name="Kelley J.M."/>
            <person name="Peterson J.D."/>
            <person name="Sadow P.W."/>
            <person name="Hanna M.C."/>
            <person name="Cotton M.D."/>
            <person name="Roberts K.M."/>
            <person name="Hurst M.A."/>
            <person name="Kaine B.P."/>
            <person name="Borodovsky M."/>
            <person name="Klenk H.-P."/>
            <person name="Fraser C.M."/>
            <person name="Smith H.O."/>
            <person name="Woese C.R."/>
            <person name="Venter J.C."/>
        </authorList>
    </citation>
    <scope>NUCLEOTIDE SEQUENCE [LARGE SCALE GENOMIC DNA]</scope>
    <source>
        <strain>ATCC 43067 / DSM 2661 / JAL-1 / JCM 10045 / NBRC 100440</strain>
    </source>
</reference>